<reference key="1">
    <citation type="journal article" date="2002" name="Nucleic Acids Res.">
        <title>Genome sequence of Shigella flexneri 2a: insights into pathogenicity through comparison with genomes of Escherichia coli K12 and O157.</title>
        <authorList>
            <person name="Jin Q."/>
            <person name="Yuan Z."/>
            <person name="Xu J."/>
            <person name="Wang Y."/>
            <person name="Shen Y."/>
            <person name="Lu W."/>
            <person name="Wang J."/>
            <person name="Liu H."/>
            <person name="Yang J."/>
            <person name="Yang F."/>
            <person name="Zhang X."/>
            <person name="Zhang J."/>
            <person name="Yang G."/>
            <person name="Wu H."/>
            <person name="Qu D."/>
            <person name="Dong J."/>
            <person name="Sun L."/>
            <person name="Xue Y."/>
            <person name="Zhao A."/>
            <person name="Gao Y."/>
            <person name="Zhu J."/>
            <person name="Kan B."/>
            <person name="Ding K."/>
            <person name="Chen S."/>
            <person name="Cheng H."/>
            <person name="Yao Z."/>
            <person name="He B."/>
            <person name="Chen R."/>
            <person name="Ma D."/>
            <person name="Qiang B."/>
            <person name="Wen Y."/>
            <person name="Hou Y."/>
            <person name="Yu J."/>
        </authorList>
    </citation>
    <scope>NUCLEOTIDE SEQUENCE [LARGE SCALE GENOMIC DNA]</scope>
    <source>
        <strain>301 / Serotype 2a</strain>
    </source>
</reference>
<reference key="2">
    <citation type="journal article" date="2003" name="Infect. Immun.">
        <title>Complete genome sequence and comparative genomics of Shigella flexneri serotype 2a strain 2457T.</title>
        <authorList>
            <person name="Wei J."/>
            <person name="Goldberg M.B."/>
            <person name="Burland V."/>
            <person name="Venkatesan M.M."/>
            <person name="Deng W."/>
            <person name="Fournier G."/>
            <person name="Mayhew G.F."/>
            <person name="Plunkett G. III"/>
            <person name="Rose D.J."/>
            <person name="Darling A."/>
            <person name="Mau B."/>
            <person name="Perna N.T."/>
            <person name="Payne S.M."/>
            <person name="Runyen-Janecky L.J."/>
            <person name="Zhou S."/>
            <person name="Schwartz D.C."/>
            <person name="Blattner F.R."/>
        </authorList>
    </citation>
    <scope>NUCLEOTIDE SEQUENCE [LARGE SCALE GENOMIC DNA]</scope>
    <source>
        <strain>ATCC 700930 / 2457T / Serotype 2a</strain>
    </source>
</reference>
<comment type="function">
    <text evidence="2">One of the primary rRNA binding proteins, it binds specifically to the 5'-end of 16S ribosomal RNA.</text>
</comment>
<comment type="subunit">
    <text evidence="2">Part of the 30S ribosomal subunit.</text>
</comment>
<comment type="similarity">
    <text evidence="2">Belongs to the universal ribosomal protein uS17 family.</text>
</comment>
<name>RS17_SHIFL</name>
<dbReference type="EMBL" id="AE005674">
    <property type="protein sequence ID" value="AAN44806.1"/>
    <property type="molecule type" value="Genomic_DNA"/>
</dbReference>
<dbReference type="EMBL" id="AE014073">
    <property type="protein sequence ID" value="AAP19370.1"/>
    <property type="molecule type" value="Genomic_DNA"/>
</dbReference>
<dbReference type="RefSeq" id="NP_709099.1">
    <property type="nucleotide sequence ID" value="NC_004337.2"/>
</dbReference>
<dbReference type="RefSeq" id="WP_000130100.1">
    <property type="nucleotide sequence ID" value="NZ_WPGW01000088.1"/>
</dbReference>
<dbReference type="SMR" id="P0AG66"/>
<dbReference type="STRING" id="198214.SF3343"/>
<dbReference type="PaxDb" id="198214-SF3343"/>
<dbReference type="GeneID" id="1026995"/>
<dbReference type="GeneID" id="93778676"/>
<dbReference type="KEGG" id="sfl:SF3343"/>
<dbReference type="KEGG" id="sfx:S4419"/>
<dbReference type="PATRIC" id="fig|198214.7.peg.3952"/>
<dbReference type="HOGENOM" id="CLU_073626_1_1_6"/>
<dbReference type="Proteomes" id="UP000001006">
    <property type="component" value="Chromosome"/>
</dbReference>
<dbReference type="Proteomes" id="UP000002673">
    <property type="component" value="Chromosome"/>
</dbReference>
<dbReference type="GO" id="GO:0022627">
    <property type="term" value="C:cytosolic small ribosomal subunit"/>
    <property type="evidence" value="ECO:0007669"/>
    <property type="project" value="TreeGrafter"/>
</dbReference>
<dbReference type="GO" id="GO:0019843">
    <property type="term" value="F:rRNA binding"/>
    <property type="evidence" value="ECO:0007669"/>
    <property type="project" value="UniProtKB-UniRule"/>
</dbReference>
<dbReference type="GO" id="GO:0003735">
    <property type="term" value="F:structural constituent of ribosome"/>
    <property type="evidence" value="ECO:0007669"/>
    <property type="project" value="InterPro"/>
</dbReference>
<dbReference type="GO" id="GO:0006412">
    <property type="term" value="P:translation"/>
    <property type="evidence" value="ECO:0007669"/>
    <property type="project" value="UniProtKB-UniRule"/>
</dbReference>
<dbReference type="CDD" id="cd00364">
    <property type="entry name" value="Ribosomal_uS17"/>
    <property type="match status" value="1"/>
</dbReference>
<dbReference type="FunFam" id="2.40.50.140:FF:000014">
    <property type="entry name" value="30S ribosomal protein S17"/>
    <property type="match status" value="1"/>
</dbReference>
<dbReference type="Gene3D" id="2.40.50.140">
    <property type="entry name" value="Nucleic acid-binding proteins"/>
    <property type="match status" value="1"/>
</dbReference>
<dbReference type="HAMAP" id="MF_01345_B">
    <property type="entry name" value="Ribosomal_uS17_B"/>
    <property type="match status" value="1"/>
</dbReference>
<dbReference type="InterPro" id="IPR012340">
    <property type="entry name" value="NA-bd_OB-fold"/>
</dbReference>
<dbReference type="InterPro" id="IPR000266">
    <property type="entry name" value="Ribosomal_uS17"/>
</dbReference>
<dbReference type="InterPro" id="IPR019984">
    <property type="entry name" value="Ribosomal_uS17_bact/chlr"/>
</dbReference>
<dbReference type="InterPro" id="IPR019979">
    <property type="entry name" value="Ribosomal_uS17_CS"/>
</dbReference>
<dbReference type="NCBIfam" id="NF004123">
    <property type="entry name" value="PRK05610.1"/>
    <property type="match status" value="1"/>
</dbReference>
<dbReference type="NCBIfam" id="TIGR03635">
    <property type="entry name" value="uS17_bact"/>
    <property type="match status" value="1"/>
</dbReference>
<dbReference type="PANTHER" id="PTHR10744">
    <property type="entry name" value="40S RIBOSOMAL PROTEIN S11 FAMILY MEMBER"/>
    <property type="match status" value="1"/>
</dbReference>
<dbReference type="PANTHER" id="PTHR10744:SF1">
    <property type="entry name" value="SMALL RIBOSOMAL SUBUNIT PROTEIN US17M"/>
    <property type="match status" value="1"/>
</dbReference>
<dbReference type="Pfam" id="PF00366">
    <property type="entry name" value="Ribosomal_S17"/>
    <property type="match status" value="1"/>
</dbReference>
<dbReference type="PRINTS" id="PR00973">
    <property type="entry name" value="RIBOSOMALS17"/>
</dbReference>
<dbReference type="SUPFAM" id="SSF50249">
    <property type="entry name" value="Nucleic acid-binding proteins"/>
    <property type="match status" value="1"/>
</dbReference>
<dbReference type="PROSITE" id="PS00056">
    <property type="entry name" value="RIBOSOMAL_S17"/>
    <property type="match status" value="1"/>
</dbReference>
<proteinExistence type="inferred from homology"/>
<organism>
    <name type="scientific">Shigella flexneri</name>
    <dbReference type="NCBI Taxonomy" id="623"/>
    <lineage>
        <taxon>Bacteria</taxon>
        <taxon>Pseudomonadati</taxon>
        <taxon>Pseudomonadota</taxon>
        <taxon>Gammaproteobacteria</taxon>
        <taxon>Enterobacterales</taxon>
        <taxon>Enterobacteriaceae</taxon>
        <taxon>Shigella</taxon>
    </lineage>
</organism>
<accession>P0AG66</accession>
<accession>P02373</accession>
<gene>
    <name evidence="2" type="primary">rpsQ</name>
    <name type="ordered locus">SF3343</name>
    <name type="ordered locus">S4419</name>
</gene>
<feature type="initiator methionine" description="Removed" evidence="1">
    <location>
        <position position="1"/>
    </location>
</feature>
<feature type="chain" id="PRO_0000128476" description="Small ribosomal subunit protein uS17">
    <location>
        <begin position="2"/>
        <end position="84"/>
    </location>
</feature>
<keyword id="KW-1185">Reference proteome</keyword>
<keyword id="KW-0687">Ribonucleoprotein</keyword>
<keyword id="KW-0689">Ribosomal protein</keyword>
<keyword id="KW-0694">RNA-binding</keyword>
<keyword id="KW-0699">rRNA-binding</keyword>
<protein>
    <recommendedName>
        <fullName evidence="2">Small ribosomal subunit protein uS17</fullName>
    </recommendedName>
    <alternativeName>
        <fullName evidence="3">30S ribosomal protein S17</fullName>
    </alternativeName>
</protein>
<evidence type="ECO:0000250" key="1"/>
<evidence type="ECO:0000255" key="2">
    <source>
        <dbReference type="HAMAP-Rule" id="MF_01345"/>
    </source>
</evidence>
<evidence type="ECO:0000305" key="3"/>
<sequence length="84" mass="9704">MTDKIRTLQGRVVSDKMEKSIVVAIERFVKHPIYGKFIKRTTKLHVHDENNECGIGDVVEIRECRPLSKTKSWTLVRVVEKAVL</sequence>